<proteinExistence type="inferred from homology"/>
<gene>
    <name evidence="1" type="primary">atpG</name>
    <name type="ordered locus">Xfasm12_0486</name>
</gene>
<keyword id="KW-0066">ATP synthesis</keyword>
<keyword id="KW-0997">Cell inner membrane</keyword>
<keyword id="KW-1003">Cell membrane</keyword>
<keyword id="KW-0139">CF(1)</keyword>
<keyword id="KW-0375">Hydrogen ion transport</keyword>
<keyword id="KW-0406">Ion transport</keyword>
<keyword id="KW-0472">Membrane</keyword>
<keyword id="KW-0813">Transport</keyword>
<comment type="function">
    <text evidence="1">Produces ATP from ADP in the presence of a proton gradient across the membrane. The gamma chain is believed to be important in regulating ATPase activity and the flow of protons through the CF(0) complex.</text>
</comment>
<comment type="subunit">
    <text evidence="1">F-type ATPases have 2 components, CF(1) - the catalytic core - and CF(0) - the membrane proton channel. CF(1) has five subunits: alpha(3), beta(3), gamma(1), delta(1), epsilon(1). CF(0) has three main subunits: a, b and c.</text>
</comment>
<comment type="subcellular location">
    <subcellularLocation>
        <location evidence="1">Cell inner membrane</location>
        <topology evidence="1">Peripheral membrane protein</topology>
    </subcellularLocation>
</comment>
<comment type="similarity">
    <text evidence="1">Belongs to the ATPase gamma chain family.</text>
</comment>
<evidence type="ECO:0000255" key="1">
    <source>
        <dbReference type="HAMAP-Rule" id="MF_00815"/>
    </source>
</evidence>
<name>ATPG_XYLFM</name>
<organism>
    <name type="scientific">Xylella fastidiosa (strain M12)</name>
    <dbReference type="NCBI Taxonomy" id="405440"/>
    <lineage>
        <taxon>Bacteria</taxon>
        <taxon>Pseudomonadati</taxon>
        <taxon>Pseudomonadota</taxon>
        <taxon>Gammaproteobacteria</taxon>
        <taxon>Lysobacterales</taxon>
        <taxon>Lysobacteraceae</taxon>
        <taxon>Xylella</taxon>
    </lineage>
</organism>
<reference key="1">
    <citation type="journal article" date="2010" name="J. Bacteriol.">
        <title>Whole genome sequences of two Xylella fastidiosa strains (M12 and M23) causing almond leaf scorch disease in California.</title>
        <authorList>
            <person name="Chen J."/>
            <person name="Xie G."/>
            <person name="Han S."/>
            <person name="Chertkov O."/>
            <person name="Sims D."/>
            <person name="Civerolo E.L."/>
        </authorList>
    </citation>
    <scope>NUCLEOTIDE SEQUENCE [LARGE SCALE GENOMIC DNA]</scope>
    <source>
        <strain>M12</strain>
    </source>
</reference>
<protein>
    <recommendedName>
        <fullName evidence="1">ATP synthase gamma chain</fullName>
    </recommendedName>
    <alternativeName>
        <fullName evidence="1">ATP synthase F1 sector gamma subunit</fullName>
    </alternativeName>
    <alternativeName>
        <fullName evidence="1">F-ATPase gamma subunit</fullName>
    </alternativeName>
</protein>
<dbReference type="EMBL" id="CP000941">
    <property type="protein sequence ID" value="ACA11495.1"/>
    <property type="molecule type" value="Genomic_DNA"/>
</dbReference>
<dbReference type="RefSeq" id="WP_004085643.1">
    <property type="nucleotide sequence ID" value="NC_010513.1"/>
</dbReference>
<dbReference type="SMR" id="B0U599"/>
<dbReference type="KEGG" id="xfm:Xfasm12_0486"/>
<dbReference type="HOGENOM" id="CLU_050669_0_1_6"/>
<dbReference type="GO" id="GO:0005886">
    <property type="term" value="C:plasma membrane"/>
    <property type="evidence" value="ECO:0007669"/>
    <property type="project" value="UniProtKB-SubCell"/>
</dbReference>
<dbReference type="GO" id="GO:0045259">
    <property type="term" value="C:proton-transporting ATP synthase complex"/>
    <property type="evidence" value="ECO:0007669"/>
    <property type="project" value="UniProtKB-KW"/>
</dbReference>
<dbReference type="GO" id="GO:0005524">
    <property type="term" value="F:ATP binding"/>
    <property type="evidence" value="ECO:0007669"/>
    <property type="project" value="UniProtKB-UniRule"/>
</dbReference>
<dbReference type="GO" id="GO:0046933">
    <property type="term" value="F:proton-transporting ATP synthase activity, rotational mechanism"/>
    <property type="evidence" value="ECO:0007669"/>
    <property type="project" value="UniProtKB-UniRule"/>
</dbReference>
<dbReference type="GO" id="GO:0042777">
    <property type="term" value="P:proton motive force-driven plasma membrane ATP synthesis"/>
    <property type="evidence" value="ECO:0007669"/>
    <property type="project" value="UniProtKB-UniRule"/>
</dbReference>
<dbReference type="CDD" id="cd12151">
    <property type="entry name" value="F1-ATPase_gamma"/>
    <property type="match status" value="1"/>
</dbReference>
<dbReference type="FunFam" id="1.10.287.80:FF:000005">
    <property type="entry name" value="ATP synthase gamma chain"/>
    <property type="match status" value="1"/>
</dbReference>
<dbReference type="FunFam" id="3.40.1380.10:FF:000006">
    <property type="entry name" value="ATP synthase gamma chain"/>
    <property type="match status" value="1"/>
</dbReference>
<dbReference type="Gene3D" id="3.40.1380.10">
    <property type="match status" value="1"/>
</dbReference>
<dbReference type="Gene3D" id="1.10.287.80">
    <property type="entry name" value="ATP synthase, gamma subunit, helix hairpin domain"/>
    <property type="match status" value="1"/>
</dbReference>
<dbReference type="HAMAP" id="MF_00815">
    <property type="entry name" value="ATP_synth_gamma_bact"/>
    <property type="match status" value="1"/>
</dbReference>
<dbReference type="InterPro" id="IPR035968">
    <property type="entry name" value="ATP_synth_F1_ATPase_gsu"/>
</dbReference>
<dbReference type="InterPro" id="IPR000131">
    <property type="entry name" value="ATP_synth_F1_gsu"/>
</dbReference>
<dbReference type="InterPro" id="IPR023632">
    <property type="entry name" value="ATP_synth_F1_gsu_CS"/>
</dbReference>
<dbReference type="NCBIfam" id="TIGR01146">
    <property type="entry name" value="ATPsyn_F1gamma"/>
    <property type="match status" value="1"/>
</dbReference>
<dbReference type="NCBIfam" id="NF004144">
    <property type="entry name" value="PRK05621.1-1"/>
    <property type="match status" value="1"/>
</dbReference>
<dbReference type="PANTHER" id="PTHR11693">
    <property type="entry name" value="ATP SYNTHASE GAMMA CHAIN"/>
    <property type="match status" value="1"/>
</dbReference>
<dbReference type="PANTHER" id="PTHR11693:SF22">
    <property type="entry name" value="ATP SYNTHASE SUBUNIT GAMMA, MITOCHONDRIAL"/>
    <property type="match status" value="1"/>
</dbReference>
<dbReference type="Pfam" id="PF00231">
    <property type="entry name" value="ATP-synt"/>
    <property type="match status" value="1"/>
</dbReference>
<dbReference type="PRINTS" id="PR00126">
    <property type="entry name" value="ATPASEGAMMA"/>
</dbReference>
<dbReference type="SUPFAM" id="SSF52943">
    <property type="entry name" value="ATP synthase (F1-ATPase), gamma subunit"/>
    <property type="match status" value="1"/>
</dbReference>
<dbReference type="PROSITE" id="PS00153">
    <property type="entry name" value="ATPASE_GAMMA"/>
    <property type="match status" value="1"/>
</dbReference>
<sequence>MASGREIKSKIKSVQNTRKVTRALEMVSASKIRKAQEQMKISRPYAQAMKQMIGHLAQANTDYLHPFLIAHKQVKRIGYIVISSDRGLAGGLNNNLFRKILGEMRQWQDKGVEVDIVTIGQKASVFFRRIKVNILGSVTHLGDTPRLEQLIGVIKVMLDAYTEEKLDRVYLVYNRFINTMVQKASFDQLLPLLAAKDKVAHHDWDYLYEPDAATVLEHVMTRYIESLVYQAMLENIASEHAARMVAMKAASDNANKLIGTLQLVYNKARQAAITQEISEIVGGAAAV</sequence>
<feature type="chain" id="PRO_1000134225" description="ATP synthase gamma chain">
    <location>
        <begin position="1"/>
        <end position="287"/>
    </location>
</feature>
<accession>B0U599</accession>